<sequence length="212" mass="22430">MTDKIVTAEEMRHYDFYTINTIGIPSLVLMERAALAVRDEILHAFPIALKDVVVVAGSGNNGGDGIAIARLLHIAGVHVTILNIGNPQHASAEHQTQEKIAQYYQIPETSDLAVLNKATLIVDAMFGIGIDRAVKGAYADAINAINNTDAVVVAVDMPSGVNTDTGEVMGTAVRATTTVTFAYNKVGLTKNDGKDYAGNVVVANDMGTYAVD</sequence>
<accession>B2G9W3</accession>
<evidence type="ECO:0000255" key="1">
    <source>
        <dbReference type="HAMAP-Rule" id="MF_01966"/>
    </source>
</evidence>
<dbReference type="EC" id="5.1.99.6" evidence="1"/>
<dbReference type="EMBL" id="AP007281">
    <property type="protein sequence ID" value="BAG26245.1"/>
    <property type="molecule type" value="Genomic_DNA"/>
</dbReference>
<dbReference type="RefSeq" id="WP_003669336.1">
    <property type="nucleotide sequence ID" value="NC_010609.1"/>
</dbReference>
<dbReference type="SMR" id="B2G9W3"/>
<dbReference type="KEGG" id="lrf:LAR_1729"/>
<dbReference type="HOGENOM" id="CLU_024853_0_1_9"/>
<dbReference type="GO" id="GO:0046872">
    <property type="term" value="F:metal ion binding"/>
    <property type="evidence" value="ECO:0007669"/>
    <property type="project" value="UniProtKB-KW"/>
</dbReference>
<dbReference type="GO" id="GO:0052856">
    <property type="term" value="F:NAD(P)HX epimerase activity"/>
    <property type="evidence" value="ECO:0007669"/>
    <property type="project" value="UniProtKB-UniRule"/>
</dbReference>
<dbReference type="GO" id="GO:0000166">
    <property type="term" value="F:nucleotide binding"/>
    <property type="evidence" value="ECO:0007669"/>
    <property type="project" value="UniProtKB-KW"/>
</dbReference>
<dbReference type="Gene3D" id="3.40.50.10260">
    <property type="entry name" value="YjeF N-terminal domain"/>
    <property type="match status" value="1"/>
</dbReference>
<dbReference type="HAMAP" id="MF_01966">
    <property type="entry name" value="NADHX_epimerase"/>
    <property type="match status" value="1"/>
</dbReference>
<dbReference type="InterPro" id="IPR004443">
    <property type="entry name" value="YjeF_N_dom"/>
</dbReference>
<dbReference type="InterPro" id="IPR036652">
    <property type="entry name" value="YjeF_N_dom_sf"/>
</dbReference>
<dbReference type="InterPro" id="IPR032976">
    <property type="entry name" value="YJEFN_prot_NAXE-like"/>
</dbReference>
<dbReference type="NCBIfam" id="TIGR00197">
    <property type="entry name" value="yjeF_nterm"/>
    <property type="match status" value="1"/>
</dbReference>
<dbReference type="PANTHER" id="PTHR13232">
    <property type="entry name" value="NAD(P)H-HYDRATE EPIMERASE"/>
    <property type="match status" value="1"/>
</dbReference>
<dbReference type="PANTHER" id="PTHR13232:SF10">
    <property type="entry name" value="NAD(P)H-HYDRATE EPIMERASE"/>
    <property type="match status" value="1"/>
</dbReference>
<dbReference type="Pfam" id="PF03853">
    <property type="entry name" value="YjeF_N"/>
    <property type="match status" value="1"/>
</dbReference>
<dbReference type="SUPFAM" id="SSF64153">
    <property type="entry name" value="YjeF N-terminal domain-like"/>
    <property type="match status" value="1"/>
</dbReference>
<dbReference type="PROSITE" id="PS51385">
    <property type="entry name" value="YJEF_N"/>
    <property type="match status" value="1"/>
</dbReference>
<gene>
    <name evidence="1" type="primary">nnrE</name>
    <name type="ordered locus">LAR_1729</name>
</gene>
<keyword id="KW-0413">Isomerase</keyword>
<keyword id="KW-0479">Metal-binding</keyword>
<keyword id="KW-0520">NAD</keyword>
<keyword id="KW-0521">NADP</keyword>
<keyword id="KW-0547">Nucleotide-binding</keyword>
<keyword id="KW-0630">Potassium</keyword>
<reference key="1">
    <citation type="journal article" date="2008" name="DNA Res.">
        <title>Comparative genome analysis of Lactobacillus reuteri and Lactobacillus fermentum reveal a genomic island for reuterin and cobalamin production.</title>
        <authorList>
            <person name="Morita H."/>
            <person name="Toh H."/>
            <person name="Fukuda S."/>
            <person name="Horikawa H."/>
            <person name="Oshima K."/>
            <person name="Suzuki T."/>
            <person name="Murakami M."/>
            <person name="Hisamatsu S."/>
            <person name="Kato Y."/>
            <person name="Takizawa T."/>
            <person name="Fukuoka H."/>
            <person name="Yoshimura T."/>
            <person name="Itoh K."/>
            <person name="O'Sullivan D.J."/>
            <person name="McKay L.L."/>
            <person name="Ohno H."/>
            <person name="Kikuchi J."/>
            <person name="Masaoka T."/>
            <person name="Hattori M."/>
        </authorList>
    </citation>
    <scope>NUCLEOTIDE SEQUENCE [LARGE SCALE GENOMIC DNA]</scope>
    <source>
        <strain>JCM 1112</strain>
    </source>
</reference>
<proteinExistence type="inferred from homology"/>
<organism>
    <name type="scientific">Limosilactobacillus reuteri subsp. reuteri (strain JCM 1112)</name>
    <name type="common">Lactobacillus reuteri</name>
    <dbReference type="NCBI Taxonomy" id="557433"/>
    <lineage>
        <taxon>Bacteria</taxon>
        <taxon>Bacillati</taxon>
        <taxon>Bacillota</taxon>
        <taxon>Bacilli</taxon>
        <taxon>Lactobacillales</taxon>
        <taxon>Lactobacillaceae</taxon>
        <taxon>Limosilactobacillus</taxon>
    </lineage>
</organism>
<name>NNRE_LIMRJ</name>
<feature type="chain" id="PRO_0000416360" description="NAD(P)H-hydrate epimerase">
    <location>
        <begin position="1"/>
        <end position="212"/>
    </location>
</feature>
<feature type="domain" description="YjeF N-terminal" evidence="1">
    <location>
        <begin position="11"/>
        <end position="212"/>
    </location>
</feature>
<feature type="binding site" evidence="1">
    <location>
        <begin position="60"/>
        <end position="64"/>
    </location>
    <ligand>
        <name>(6S)-NADPHX</name>
        <dbReference type="ChEBI" id="CHEBI:64076"/>
    </ligand>
</feature>
<feature type="binding site" evidence="1">
    <location>
        <position position="61"/>
    </location>
    <ligand>
        <name>K(+)</name>
        <dbReference type="ChEBI" id="CHEBI:29103"/>
    </ligand>
</feature>
<feature type="binding site" evidence="1">
    <location>
        <position position="123"/>
    </location>
    <ligand>
        <name>K(+)</name>
        <dbReference type="ChEBI" id="CHEBI:29103"/>
    </ligand>
</feature>
<feature type="binding site" evidence="1">
    <location>
        <begin position="127"/>
        <end position="133"/>
    </location>
    <ligand>
        <name>(6S)-NADPHX</name>
        <dbReference type="ChEBI" id="CHEBI:64076"/>
    </ligand>
</feature>
<feature type="binding site" evidence="1">
    <location>
        <position position="138"/>
    </location>
    <ligand>
        <name>(6S)-NADPHX</name>
        <dbReference type="ChEBI" id="CHEBI:64076"/>
    </ligand>
</feature>
<feature type="binding site" evidence="1">
    <location>
        <position position="156"/>
    </location>
    <ligand>
        <name>(6S)-NADPHX</name>
        <dbReference type="ChEBI" id="CHEBI:64076"/>
    </ligand>
</feature>
<feature type="binding site" evidence="1">
    <location>
        <position position="159"/>
    </location>
    <ligand>
        <name>K(+)</name>
        <dbReference type="ChEBI" id="CHEBI:29103"/>
    </ligand>
</feature>
<comment type="function">
    <text evidence="1">Catalyzes the epimerization of the S- and R-forms of NAD(P)HX, a damaged form of NAD(P)H that is a result of enzymatic or heat-dependent hydration. This is a prerequisite for the S-specific NAD(P)H-hydrate dehydratase to allow the repair of both epimers of NAD(P)HX.</text>
</comment>
<comment type="catalytic activity">
    <reaction evidence="1">
        <text>(6R)-NADHX = (6S)-NADHX</text>
        <dbReference type="Rhea" id="RHEA:32215"/>
        <dbReference type="ChEBI" id="CHEBI:64074"/>
        <dbReference type="ChEBI" id="CHEBI:64075"/>
        <dbReference type="EC" id="5.1.99.6"/>
    </reaction>
</comment>
<comment type="catalytic activity">
    <reaction evidence="1">
        <text>(6R)-NADPHX = (6S)-NADPHX</text>
        <dbReference type="Rhea" id="RHEA:32227"/>
        <dbReference type="ChEBI" id="CHEBI:64076"/>
        <dbReference type="ChEBI" id="CHEBI:64077"/>
        <dbReference type="EC" id="5.1.99.6"/>
    </reaction>
</comment>
<comment type="cofactor">
    <cofactor evidence="1">
        <name>K(+)</name>
        <dbReference type="ChEBI" id="CHEBI:29103"/>
    </cofactor>
    <text evidence="1">Binds 1 potassium ion per subunit.</text>
</comment>
<comment type="similarity">
    <text evidence="1">Belongs to the NnrE/AIBP family.</text>
</comment>
<protein>
    <recommendedName>
        <fullName evidence="1">NAD(P)H-hydrate epimerase</fullName>
        <ecNumber evidence="1">5.1.99.6</ecNumber>
    </recommendedName>
    <alternativeName>
        <fullName evidence="1">NAD(P)HX epimerase</fullName>
    </alternativeName>
</protein>